<comment type="function">
    <text evidence="1">One of the primary rRNA binding proteins, it binds specifically to the 5'-end of 16S ribosomal RNA.</text>
</comment>
<comment type="subunit">
    <text evidence="1">Part of the 30S ribosomal subunit.</text>
</comment>
<comment type="similarity">
    <text evidence="1">Belongs to the universal ribosomal protein uS17 family.</text>
</comment>
<reference key="1">
    <citation type="submission" date="2005-11" db="EMBL/GenBank/DDBJ databases">
        <title>The complete genome sequence of Lawsonia intracellularis: the causative agent of proliferative enteropathy.</title>
        <authorList>
            <person name="Kaur K."/>
            <person name="Zhang Q."/>
            <person name="Beckler D."/>
            <person name="Munir S."/>
            <person name="Li L."/>
            <person name="Kinsley K."/>
            <person name="Herron L."/>
            <person name="Peterson A."/>
            <person name="May B."/>
            <person name="Singh S."/>
            <person name="Gebhart C."/>
            <person name="Kapur V."/>
        </authorList>
    </citation>
    <scope>NUCLEOTIDE SEQUENCE [LARGE SCALE GENOMIC DNA]</scope>
    <source>
        <strain>PHE/MN1-00</strain>
    </source>
</reference>
<protein>
    <recommendedName>
        <fullName evidence="1">Small ribosomal subunit protein uS17</fullName>
    </recommendedName>
    <alternativeName>
        <fullName evidence="2">30S ribosomal protein S17</fullName>
    </alternativeName>
</protein>
<organism>
    <name type="scientific">Lawsonia intracellularis (strain PHE/MN1-00)</name>
    <dbReference type="NCBI Taxonomy" id="363253"/>
    <lineage>
        <taxon>Bacteria</taxon>
        <taxon>Pseudomonadati</taxon>
        <taxon>Thermodesulfobacteriota</taxon>
        <taxon>Desulfovibrionia</taxon>
        <taxon>Desulfovibrionales</taxon>
        <taxon>Desulfovibrionaceae</taxon>
        <taxon>Lawsonia</taxon>
    </lineage>
</organism>
<proteinExistence type="inferred from homology"/>
<accession>Q1MPQ5</accession>
<feature type="chain" id="PRO_0000255684" description="Small ribosomal subunit protein uS17">
    <location>
        <begin position="1"/>
        <end position="88"/>
    </location>
</feature>
<gene>
    <name evidence="1" type="primary">rpsQ</name>
    <name type="ordered locus">LI0968</name>
</gene>
<sequence>MPQIIAKCNGRVLVGTVISDKNDKTIIVHVETLVKHPLLKKFIRHRKKFTAHDPLNECSIGDTVKIIEFRPLSRNKRWHLVAILEKAV</sequence>
<name>RS17_LAWIP</name>
<keyword id="KW-1185">Reference proteome</keyword>
<keyword id="KW-0687">Ribonucleoprotein</keyword>
<keyword id="KW-0689">Ribosomal protein</keyword>
<keyword id="KW-0694">RNA-binding</keyword>
<keyword id="KW-0699">rRNA-binding</keyword>
<dbReference type="EMBL" id="AM180252">
    <property type="protein sequence ID" value="CAJ55022.1"/>
    <property type="molecule type" value="Genomic_DNA"/>
</dbReference>
<dbReference type="RefSeq" id="WP_011527051.1">
    <property type="nucleotide sequence ID" value="NC_008011.1"/>
</dbReference>
<dbReference type="SMR" id="Q1MPQ5"/>
<dbReference type="STRING" id="363253.LI0968"/>
<dbReference type="KEGG" id="lip:LI0968"/>
<dbReference type="eggNOG" id="COG0186">
    <property type="taxonomic scope" value="Bacteria"/>
</dbReference>
<dbReference type="HOGENOM" id="CLU_073626_1_0_7"/>
<dbReference type="OrthoDB" id="9811714at2"/>
<dbReference type="Proteomes" id="UP000002430">
    <property type="component" value="Chromosome"/>
</dbReference>
<dbReference type="GO" id="GO:0022627">
    <property type="term" value="C:cytosolic small ribosomal subunit"/>
    <property type="evidence" value="ECO:0007669"/>
    <property type="project" value="TreeGrafter"/>
</dbReference>
<dbReference type="GO" id="GO:0019843">
    <property type="term" value="F:rRNA binding"/>
    <property type="evidence" value="ECO:0007669"/>
    <property type="project" value="UniProtKB-UniRule"/>
</dbReference>
<dbReference type="GO" id="GO:0003735">
    <property type="term" value="F:structural constituent of ribosome"/>
    <property type="evidence" value="ECO:0007669"/>
    <property type="project" value="InterPro"/>
</dbReference>
<dbReference type="GO" id="GO:0006412">
    <property type="term" value="P:translation"/>
    <property type="evidence" value="ECO:0007669"/>
    <property type="project" value="UniProtKB-UniRule"/>
</dbReference>
<dbReference type="CDD" id="cd00364">
    <property type="entry name" value="Ribosomal_uS17"/>
    <property type="match status" value="1"/>
</dbReference>
<dbReference type="Gene3D" id="2.40.50.140">
    <property type="entry name" value="Nucleic acid-binding proteins"/>
    <property type="match status" value="1"/>
</dbReference>
<dbReference type="HAMAP" id="MF_01345_B">
    <property type="entry name" value="Ribosomal_uS17_B"/>
    <property type="match status" value="1"/>
</dbReference>
<dbReference type="InterPro" id="IPR012340">
    <property type="entry name" value="NA-bd_OB-fold"/>
</dbReference>
<dbReference type="InterPro" id="IPR000266">
    <property type="entry name" value="Ribosomal_uS17"/>
</dbReference>
<dbReference type="InterPro" id="IPR019984">
    <property type="entry name" value="Ribosomal_uS17_bact/chlr"/>
</dbReference>
<dbReference type="InterPro" id="IPR019979">
    <property type="entry name" value="Ribosomal_uS17_CS"/>
</dbReference>
<dbReference type="NCBIfam" id="NF004123">
    <property type="entry name" value="PRK05610.1"/>
    <property type="match status" value="1"/>
</dbReference>
<dbReference type="NCBIfam" id="TIGR03635">
    <property type="entry name" value="uS17_bact"/>
    <property type="match status" value="1"/>
</dbReference>
<dbReference type="PANTHER" id="PTHR10744">
    <property type="entry name" value="40S RIBOSOMAL PROTEIN S11 FAMILY MEMBER"/>
    <property type="match status" value="1"/>
</dbReference>
<dbReference type="PANTHER" id="PTHR10744:SF1">
    <property type="entry name" value="SMALL RIBOSOMAL SUBUNIT PROTEIN US17M"/>
    <property type="match status" value="1"/>
</dbReference>
<dbReference type="Pfam" id="PF00366">
    <property type="entry name" value="Ribosomal_S17"/>
    <property type="match status" value="1"/>
</dbReference>
<dbReference type="PRINTS" id="PR00973">
    <property type="entry name" value="RIBOSOMALS17"/>
</dbReference>
<dbReference type="SUPFAM" id="SSF50249">
    <property type="entry name" value="Nucleic acid-binding proteins"/>
    <property type="match status" value="1"/>
</dbReference>
<dbReference type="PROSITE" id="PS00056">
    <property type="entry name" value="RIBOSOMAL_S17"/>
    <property type="match status" value="1"/>
</dbReference>
<evidence type="ECO:0000255" key="1">
    <source>
        <dbReference type="HAMAP-Rule" id="MF_01345"/>
    </source>
</evidence>
<evidence type="ECO:0000305" key="2"/>